<evidence type="ECO:0000250" key="1"/>
<evidence type="ECO:0000255" key="2"/>
<evidence type="ECO:0000255" key="3">
    <source>
        <dbReference type="PROSITE-ProRule" id="PRU01340"/>
    </source>
</evidence>
<evidence type="ECO:0000256" key="4">
    <source>
        <dbReference type="SAM" id="MobiDB-lite"/>
    </source>
</evidence>
<evidence type="ECO:0000269" key="5">
    <source>
    </source>
</evidence>
<evidence type="ECO:0000269" key="6">
    <source>
    </source>
</evidence>
<evidence type="ECO:0000269" key="7">
    <source>
    </source>
</evidence>
<evidence type="ECO:0000269" key="8">
    <source ref="3"/>
</evidence>
<evidence type="ECO:0000269" key="9">
    <source ref="5"/>
</evidence>
<evidence type="ECO:0000303" key="10">
    <source>
    </source>
</evidence>
<evidence type="ECO:0000303" key="11">
    <source>
    </source>
</evidence>
<evidence type="ECO:0000305" key="12"/>
<proteinExistence type="evidence at protein level"/>
<gene>
    <name type="primary">ART3</name>
    <name type="synonym">TMART</name>
</gene>
<accession>Q13508</accession>
<accession>Q53XW3</accession>
<accession>Q6FHT7</accession>
<accession>Q8WVJ7</accession>
<accession>Q93069</accession>
<accession>Q96HL1</accession>
<name>NAR3_HUMAN</name>
<reference key="1">
    <citation type="journal article" date="1996" name="FEBS Lett.">
        <title>Human testis specifically expresses a homologue of the rodent T lymphocytes RT6 mRNA.</title>
        <authorList>
            <person name="Levy I."/>
            <person name="Wu Y.-Q."/>
            <person name="Roeckel N."/>
            <person name="Bulle F."/>
            <person name="Pawlak A."/>
            <person name="Siegrist S."/>
            <person name="Mattei M.-G."/>
            <person name="Guellaen G."/>
        </authorList>
    </citation>
    <scope>NUCLEOTIDE SEQUENCE [MRNA] (ISOFORM 1)</scope>
    <source>
        <tissue>Testis</tissue>
    </source>
</reference>
<reference key="2">
    <citation type="journal article" date="1997" name="Genomics">
        <title>Two novel human members of an emerging mammalian gene family related to mono-ADP-ribosylating bacterial toxins.</title>
        <authorList>
            <person name="Koch-Nolte F."/>
            <person name="Haag F."/>
            <person name="Braren R."/>
            <person name="Kuehl M."/>
            <person name="Hoovers J."/>
            <person name="Balasubramanian S."/>
            <person name="Bazan J.F."/>
            <person name="Thiele H.-G."/>
        </authorList>
    </citation>
    <scope>NUCLEOTIDE SEQUENCE [GENOMIC DNA] (ISOFORM 1)</scope>
</reference>
<reference key="3">
    <citation type="submission" date="2003-05" db="EMBL/GenBank/DDBJ databases">
        <title>Cloning of human full-length CDSs in BD Creator(TM) system donor vector.</title>
        <authorList>
            <person name="Kalnine N."/>
            <person name="Chen X."/>
            <person name="Rolfs A."/>
            <person name="Halleck A."/>
            <person name="Hines L."/>
            <person name="Eisenstein S."/>
            <person name="Koundinya M."/>
            <person name="Raphael J."/>
            <person name="Moreira D."/>
            <person name="Kelley T."/>
            <person name="LaBaer J."/>
            <person name="Lin Y."/>
            <person name="Phelan M."/>
            <person name="Farmer A."/>
        </authorList>
    </citation>
    <scope>NUCLEOTIDE SEQUENCE [LARGE SCALE MRNA]</scope>
    <scope>VARIANT LEU-363</scope>
</reference>
<reference key="4">
    <citation type="submission" date="2004-06" db="EMBL/GenBank/DDBJ databases">
        <title>Cloning of human full open reading frames in Gateway(TM) system entry vector (pDONR201).</title>
        <authorList>
            <person name="Ebert L."/>
            <person name="Schick M."/>
            <person name="Neubert P."/>
            <person name="Schatten R."/>
            <person name="Henze S."/>
            <person name="Korn B."/>
        </authorList>
    </citation>
    <scope>NUCLEOTIDE SEQUENCE [LARGE SCALE MRNA] (ISOFORM 3)</scope>
</reference>
<reference key="5">
    <citation type="submission" date="2005-07" db="EMBL/GenBank/DDBJ databases">
        <authorList>
            <person name="Mural R.J."/>
            <person name="Istrail S."/>
            <person name="Sutton G.G."/>
            <person name="Florea L."/>
            <person name="Halpern A.L."/>
            <person name="Mobarry C.M."/>
            <person name="Lippert R."/>
            <person name="Walenz B."/>
            <person name="Shatkay H."/>
            <person name="Dew I."/>
            <person name="Miller J.R."/>
            <person name="Flanigan M.J."/>
            <person name="Edwards N.J."/>
            <person name="Bolanos R."/>
            <person name="Fasulo D."/>
            <person name="Halldorsson B.V."/>
            <person name="Hannenhalli S."/>
            <person name="Turner R."/>
            <person name="Yooseph S."/>
            <person name="Lu F."/>
            <person name="Nusskern D.R."/>
            <person name="Shue B.C."/>
            <person name="Zheng X.H."/>
            <person name="Zhong F."/>
            <person name="Delcher A.L."/>
            <person name="Huson D.H."/>
            <person name="Kravitz S.A."/>
            <person name="Mouchard L."/>
            <person name="Reinert K."/>
            <person name="Remington K.A."/>
            <person name="Clark A.G."/>
            <person name="Waterman M.S."/>
            <person name="Eichler E.E."/>
            <person name="Adams M.D."/>
            <person name="Hunkapiller M.W."/>
            <person name="Myers E.W."/>
            <person name="Venter J.C."/>
        </authorList>
    </citation>
    <scope>NUCLEOTIDE SEQUENCE [LARGE SCALE GENOMIC DNA]</scope>
    <scope>VARIANT LEU-363</scope>
</reference>
<reference key="6">
    <citation type="journal article" date="2004" name="Genome Res.">
        <title>The status, quality, and expansion of the NIH full-length cDNA project: the Mammalian Gene Collection (MGC).</title>
        <authorList>
            <consortium name="The MGC Project Team"/>
        </authorList>
    </citation>
    <scope>NUCLEOTIDE SEQUENCE [LARGE SCALE MRNA] (ISOFORMS 2 AND 3)</scope>
    <scope>VARIANT LEU-363</scope>
    <source>
        <tissue>Skeletal muscle</tissue>
    </source>
</reference>
<reference key="7">
    <citation type="journal article" date="2010" name="Trends Biochem. Sci.">
        <title>Toward a unified nomenclature for mammalian ADP-ribosyltransferases.</title>
        <authorList>
            <person name="Hottiger M.O."/>
            <person name="Hassa P.O."/>
            <person name="Luscher B."/>
            <person name="Schuler H."/>
            <person name="Koch-Nolte F."/>
        </authorList>
    </citation>
    <scope>NOMENCLATURE</scope>
</reference>
<reference key="8">
    <citation type="journal article" date="2012" name="Mol. Cell. Proteomics">
        <title>Human urinary glycoproteomics; attachment site specific analysis of N- and O-linked glycosylations by CID and ECD.</title>
        <authorList>
            <person name="Halim A."/>
            <person name="Nilsson J."/>
            <person name="Ruetschi U."/>
            <person name="Hesse C."/>
            <person name="Larson G."/>
        </authorList>
    </citation>
    <scope>GLYCOSYLATION AT THR-346</scope>
    <scope>STRUCTURE OF CARBOHYDRATES</scope>
    <scope>IDENTIFICATION BY MASS SPECTROMETRY</scope>
</reference>
<reference key="9">
    <citation type="journal article" date="2017" name="Andrology">
        <title>Next-generation sequencing for patients with non-obstructive azoospermia: implications for significant roles of monogenic/oligogenic mutations.</title>
        <authorList>
            <person name="Nakamura S."/>
            <person name="Miyado M."/>
            <person name="Saito K."/>
            <person name="Katsumi M."/>
            <person name="Nakamura A."/>
            <person name="Kobori Y."/>
            <person name="Tanaka Y."/>
            <person name="Ishikawa H."/>
            <person name="Yoshida A."/>
            <person name="Okada H."/>
            <person name="Hata K."/>
            <person name="Nakabayashi K."/>
            <person name="Okamura K."/>
            <person name="Ogata H."/>
            <person name="Matsubara Y."/>
            <person name="Ogata T."/>
            <person name="Nakai H."/>
            <person name="Fukami M."/>
        </authorList>
    </citation>
    <scope>VARIANT SER-334</scope>
</reference>
<comment type="catalytic activity">
    <reaction>
        <text>L-arginyl-[protein] + NAD(+) = N(omega)-(ADP-D-ribosyl)-L-arginyl-[protein] + nicotinamide + H(+)</text>
        <dbReference type="Rhea" id="RHEA:19149"/>
        <dbReference type="Rhea" id="RHEA-COMP:10532"/>
        <dbReference type="Rhea" id="RHEA-COMP:15087"/>
        <dbReference type="ChEBI" id="CHEBI:15378"/>
        <dbReference type="ChEBI" id="CHEBI:17154"/>
        <dbReference type="ChEBI" id="CHEBI:29965"/>
        <dbReference type="ChEBI" id="CHEBI:57540"/>
        <dbReference type="ChEBI" id="CHEBI:142554"/>
        <dbReference type="EC" id="2.4.2.31"/>
    </reaction>
</comment>
<comment type="subcellular location">
    <subcellularLocation>
        <location>Cell membrane</location>
        <topology>Lipid-anchor</topology>
        <topology>GPI-anchor</topology>
    </subcellularLocation>
</comment>
<comment type="alternative products">
    <event type="alternative splicing"/>
    <isoform>
        <id>Q13508-1</id>
        <name>3</name>
        <sequence type="displayed"/>
    </isoform>
    <isoform>
        <id>Q13508-2</id>
        <name>1</name>
        <sequence type="described" ref="VSP_003375"/>
    </isoform>
    <isoform>
        <id>Q13508-3</id>
        <name>2</name>
        <sequence type="described" ref="VSP_003374"/>
    </isoform>
    <text>Experimental confirmation may be lacking for some isoforms.</text>
</comment>
<comment type="tissue specificity">
    <text>Testis specific.</text>
</comment>
<comment type="PTM">
    <text evidence="6">O-glycosylated with core 1 or possibly core 8 glycans.</text>
</comment>
<comment type="similarity">
    <text evidence="12">Belongs to the Arg-specific ADP-ribosyltransferase family.</text>
</comment>
<protein>
    <recommendedName>
        <fullName>Ecto-ADP-ribosyltransferase 3</fullName>
        <ecNumber>2.4.2.31</ecNumber>
    </recommendedName>
    <alternativeName>
        <fullName>ADP-ribosyltransferase C2 and C3 toxin-like 3</fullName>
        <shortName>ARTC3</shortName>
    </alternativeName>
    <alternativeName>
        <fullName>Mono(ADP-ribosyl)transferase 3</fullName>
    </alternativeName>
    <alternativeName>
        <fullName>NAD(P)(+)--arginine ADP-ribosyltransferase 3</fullName>
    </alternativeName>
</protein>
<sequence>MKTGHFEIVTMLLATMILVDIFQVKAEVLDMADNAFDDEYLKCTDRMEIKYVPQLLKEEKASHQQLDTVWENAKAKWAARKTQIFLPMNFKDNHGIALMAYISEAQEQTPFYHLFSEAVKMAGQSREDYIYGFQFKAFHFYLTRALQLLRKPCEASSKTVVYRTSQGTSFTFGGLNQARFGHFTLAYSAKPQAANDQLTVLSIYTCLGVDIENFLDKESERITLIPLNEVFQVSQEGAGNNLILQSINKTCSHYECAFLGGLKTENCIENLEYFQPIYVYNPGEKNQKLEDHSEKNWKLEDHGEKNQKLEDHGVKILEPTQIPGMKIPEPFPLPEDKSQGNINNPTPGPVPVPGPKSHPSASSGKLLLPQFGMVIILISVSAINLFVAL</sequence>
<keyword id="KW-0025">Alternative splicing</keyword>
<keyword id="KW-1003">Cell membrane</keyword>
<keyword id="KW-1015">Disulfide bond</keyword>
<keyword id="KW-0325">Glycoprotein</keyword>
<keyword id="KW-0328">Glycosyltransferase</keyword>
<keyword id="KW-0336">GPI-anchor</keyword>
<keyword id="KW-0449">Lipoprotein</keyword>
<keyword id="KW-0472">Membrane</keyword>
<keyword id="KW-0520">NAD</keyword>
<keyword id="KW-0521">NADP</keyword>
<keyword id="KW-0548">Nucleotidyltransferase</keyword>
<keyword id="KW-1267">Proteomics identification</keyword>
<keyword id="KW-1185">Reference proteome</keyword>
<keyword id="KW-0677">Repeat</keyword>
<keyword id="KW-0732">Signal</keyword>
<keyword id="KW-0808">Transferase</keyword>
<feature type="signal peptide" evidence="2">
    <location>
        <begin position="1"/>
        <end position="26"/>
    </location>
</feature>
<feature type="chain" id="PRO_0000019325" description="Ecto-ADP-ribosyltransferase 3">
    <location>
        <begin position="27"/>
        <end position="362"/>
    </location>
</feature>
<feature type="propeptide" id="PRO_0000019326" description="Removed in mature form" evidence="1">
    <location>
        <begin position="363"/>
        <end position="389"/>
    </location>
</feature>
<feature type="domain" description="TR mART core" evidence="3">
    <location>
        <begin position="64"/>
        <end position="251"/>
    </location>
</feature>
<feature type="repeat" description="1">
    <location>
        <begin position="283"/>
        <end position="292"/>
    </location>
</feature>
<feature type="repeat" description="2">
    <location>
        <begin position="293"/>
        <end position="302"/>
    </location>
</feature>
<feature type="repeat" description="3">
    <location>
        <begin position="303"/>
        <end position="312"/>
    </location>
</feature>
<feature type="region of interest" description="3 X 10 AA tandem repeats of [GS]-E-K-N-[QW]-K-L-E-D-H">
    <location>
        <begin position="283"/>
        <end position="312"/>
    </location>
</feature>
<feature type="region of interest" description="Disordered" evidence="4">
    <location>
        <begin position="325"/>
        <end position="362"/>
    </location>
</feature>
<feature type="compositionally biased region" description="Pro residues" evidence="4">
    <location>
        <begin position="346"/>
        <end position="356"/>
    </location>
</feature>
<feature type="binding site" evidence="1">
    <location>
        <position position="101"/>
    </location>
    <ligand>
        <name>NAD(+)</name>
        <dbReference type="ChEBI" id="CHEBI:57540"/>
    </ligand>
</feature>
<feature type="binding site" evidence="1">
    <location>
        <position position="163"/>
    </location>
    <ligand>
        <name>NAD(+)</name>
        <dbReference type="ChEBI" id="CHEBI:57540"/>
    </ligand>
</feature>
<feature type="lipid moiety-binding region" description="GPI-anchor amidated serine" evidence="1">
    <location>
        <position position="362"/>
    </location>
</feature>
<feature type="glycosylation site" description="N-linked (GlcNAc...) asparagine" evidence="2">
    <location>
        <position position="248"/>
    </location>
</feature>
<feature type="glycosylation site" description="O-linked (GalNAc...) threonine" evidence="6">
    <location>
        <position position="346"/>
    </location>
</feature>
<feature type="disulfide bond" evidence="1">
    <location>
        <begin position="43"/>
        <end position="256"/>
    </location>
</feature>
<feature type="splice variant" id="VSP_003375" description="In isoform 1." evidence="11">
    <original>GMKIPEPFPLPEDKSQGNINNPT</original>
    <variation>A</variation>
    <location>
        <begin position="324"/>
        <end position="346"/>
    </location>
</feature>
<feature type="splice variant" id="VSP_003374" description="In isoform 2." evidence="10">
    <location>
        <begin position="324"/>
        <end position="334"/>
    </location>
</feature>
<feature type="sequence variant" id="VAR_081146" description="Found in patients with non-obstructive azoospermia; uncertain significance; dbSNP:rs143599971." evidence="7">
    <original>P</original>
    <variation>S</variation>
    <location>
        <position position="334"/>
    </location>
</feature>
<feature type="sequence variant" id="VAR_060072" description="In dbSNP:rs1128864." evidence="5 8 9">
    <original>S</original>
    <variation>L</variation>
    <location>
        <position position="363"/>
    </location>
</feature>
<feature type="sequence conflict" description="In Ref. 2; CAA65096." evidence="12" ref="2">
    <original>S</original>
    <variation>C</variation>
    <location>
        <position position="357"/>
    </location>
</feature>
<organism>
    <name type="scientific">Homo sapiens</name>
    <name type="common">Human</name>
    <dbReference type="NCBI Taxonomy" id="9606"/>
    <lineage>
        <taxon>Eukaryota</taxon>
        <taxon>Metazoa</taxon>
        <taxon>Chordata</taxon>
        <taxon>Craniata</taxon>
        <taxon>Vertebrata</taxon>
        <taxon>Euteleostomi</taxon>
        <taxon>Mammalia</taxon>
        <taxon>Eutheria</taxon>
        <taxon>Euarchontoglires</taxon>
        <taxon>Primates</taxon>
        <taxon>Haplorrhini</taxon>
        <taxon>Catarrhini</taxon>
        <taxon>Hominidae</taxon>
        <taxon>Homo</taxon>
    </lineage>
</organism>
<dbReference type="EC" id="2.4.2.31"/>
<dbReference type="EMBL" id="U47054">
    <property type="protein sequence ID" value="AAB01894.1"/>
    <property type="molecule type" value="mRNA"/>
</dbReference>
<dbReference type="EMBL" id="X95827">
    <property type="protein sequence ID" value="CAA65096.1"/>
    <property type="molecule type" value="Genomic_DNA"/>
</dbReference>
<dbReference type="EMBL" id="BT007249">
    <property type="protein sequence ID" value="AAP35913.1"/>
    <property type="molecule type" value="mRNA"/>
</dbReference>
<dbReference type="EMBL" id="CR541664">
    <property type="protein sequence ID" value="CAG46465.1"/>
    <property type="molecule type" value="mRNA"/>
</dbReference>
<dbReference type="EMBL" id="CH471057">
    <property type="protein sequence ID" value="EAX05765.1"/>
    <property type="molecule type" value="Genomic_DNA"/>
</dbReference>
<dbReference type="EMBL" id="BC008397">
    <property type="protein sequence ID" value="AAH08397.1"/>
    <property type="molecule type" value="mRNA"/>
</dbReference>
<dbReference type="EMBL" id="BC017913">
    <property type="protein sequence ID" value="AAH17913.1"/>
    <property type="molecule type" value="mRNA"/>
</dbReference>
<dbReference type="CCDS" id="CCDS3575.1">
    <molecule id="Q13508-3"/>
</dbReference>
<dbReference type="CCDS" id="CCDS47079.1">
    <molecule id="Q13508-1"/>
</dbReference>
<dbReference type="CCDS" id="CCDS47080.1">
    <molecule id="Q13508-2"/>
</dbReference>
<dbReference type="PIR" id="S62906">
    <property type="entry name" value="S62906"/>
</dbReference>
<dbReference type="RefSeq" id="NP_001123488.1">
    <molecule id="Q13508-1"/>
    <property type="nucleotide sequence ID" value="NM_001130016.3"/>
</dbReference>
<dbReference type="RefSeq" id="NP_001123489.1">
    <molecule id="Q13508-2"/>
    <property type="nucleotide sequence ID" value="NM_001130017.3"/>
</dbReference>
<dbReference type="RefSeq" id="NP_001170.2">
    <molecule id="Q13508-3"/>
    <property type="nucleotide sequence ID" value="NM_001179.5"/>
</dbReference>
<dbReference type="RefSeq" id="NP_001364104.1">
    <molecule id="Q13508-2"/>
    <property type="nucleotide sequence ID" value="NM_001377175.1"/>
</dbReference>
<dbReference type="RefSeq" id="XP_047271652.1">
    <molecule id="Q13508-2"/>
    <property type="nucleotide sequence ID" value="XM_047415696.1"/>
</dbReference>
<dbReference type="RefSeq" id="XP_047271653.1">
    <molecule id="Q13508-2"/>
    <property type="nucleotide sequence ID" value="XM_047415697.1"/>
</dbReference>
<dbReference type="RefSeq" id="XP_047271654.1">
    <molecule id="Q13508-2"/>
    <property type="nucleotide sequence ID" value="XM_047415698.1"/>
</dbReference>
<dbReference type="RefSeq" id="XP_054206016.1">
    <molecule id="Q13508-2"/>
    <property type="nucleotide sequence ID" value="XM_054350041.1"/>
</dbReference>
<dbReference type="RefSeq" id="XP_054206017.1">
    <molecule id="Q13508-2"/>
    <property type="nucleotide sequence ID" value="XM_054350042.1"/>
</dbReference>
<dbReference type="RefSeq" id="XP_054206018.1">
    <molecule id="Q13508-2"/>
    <property type="nucleotide sequence ID" value="XM_054350043.1"/>
</dbReference>
<dbReference type="SMR" id="Q13508"/>
<dbReference type="BioGRID" id="106912">
    <property type="interactions" value="28"/>
</dbReference>
<dbReference type="FunCoup" id="Q13508">
    <property type="interactions" value="153"/>
</dbReference>
<dbReference type="IntAct" id="Q13508">
    <property type="interactions" value="12"/>
</dbReference>
<dbReference type="STRING" id="9606.ENSP00000348064"/>
<dbReference type="GlyConnect" id="2924">
    <property type="glycosylation" value="1 O-Linked glycan (1 site)"/>
</dbReference>
<dbReference type="GlyConnect" id="808">
    <property type="glycosylation" value="2 N-Linked glycans (1 site), 1 O-Linked glycan (1 site)"/>
</dbReference>
<dbReference type="GlyCosmos" id="Q13508">
    <property type="glycosylation" value="2 sites, 4 glycans"/>
</dbReference>
<dbReference type="GlyGen" id="Q13508">
    <property type="glycosylation" value="2 sites, 7 N-linked glycans (1 site), 2 O-linked glycans (1 site)"/>
</dbReference>
<dbReference type="iPTMnet" id="Q13508"/>
<dbReference type="PhosphoSitePlus" id="Q13508"/>
<dbReference type="BioMuta" id="ART3"/>
<dbReference type="DMDM" id="22261808"/>
<dbReference type="MassIVE" id="Q13508"/>
<dbReference type="PaxDb" id="9606-ENSP00000348064"/>
<dbReference type="PeptideAtlas" id="Q13508"/>
<dbReference type="ProteomicsDB" id="59507">
    <molecule id="Q13508-1"/>
</dbReference>
<dbReference type="ProteomicsDB" id="59508">
    <molecule id="Q13508-2"/>
</dbReference>
<dbReference type="ProteomicsDB" id="59509">
    <molecule id="Q13508-3"/>
</dbReference>
<dbReference type="Antibodypedia" id="2182">
    <property type="antibodies" value="392 antibodies from 29 providers"/>
</dbReference>
<dbReference type="DNASU" id="419"/>
<dbReference type="Ensembl" id="ENST00000341029.9">
    <molecule id="Q13508-2"/>
    <property type="protein sequence ID" value="ENSP00000343843.5"/>
    <property type="gene ID" value="ENSG00000156219.18"/>
</dbReference>
<dbReference type="Ensembl" id="ENST00000349321.7">
    <molecule id="Q13508-3"/>
    <property type="protein sequence ID" value="ENSP00000304313.5"/>
    <property type="gene ID" value="ENSG00000156219.18"/>
</dbReference>
<dbReference type="Ensembl" id="ENST00000355810.9">
    <molecule id="Q13508-1"/>
    <property type="protein sequence ID" value="ENSP00000348064.4"/>
    <property type="gene ID" value="ENSG00000156219.18"/>
</dbReference>
<dbReference type="GeneID" id="419"/>
<dbReference type="KEGG" id="hsa:419"/>
<dbReference type="MANE-Select" id="ENST00000355810.9">
    <property type="protein sequence ID" value="ENSP00000348064.4"/>
    <property type="RefSeq nucleotide sequence ID" value="NM_001130016.3"/>
    <property type="RefSeq protein sequence ID" value="NP_001123488.1"/>
</dbReference>
<dbReference type="UCSC" id="uc003hjk.4">
    <molecule id="Q13508-1"/>
    <property type="organism name" value="human"/>
</dbReference>
<dbReference type="AGR" id="HGNC:725"/>
<dbReference type="CTD" id="419"/>
<dbReference type="DisGeNET" id="419"/>
<dbReference type="GeneCards" id="ART3"/>
<dbReference type="HGNC" id="HGNC:725">
    <property type="gene designation" value="ART3"/>
</dbReference>
<dbReference type="HPA" id="ENSG00000156219">
    <property type="expression patterns" value="Group enriched (heart muscle, skeletal muscle, testis, tongue)"/>
</dbReference>
<dbReference type="MIM" id="603086">
    <property type="type" value="gene"/>
</dbReference>
<dbReference type="neXtProt" id="NX_Q13508"/>
<dbReference type="OpenTargets" id="ENSG00000156219"/>
<dbReference type="PharmGKB" id="PA25016"/>
<dbReference type="VEuPathDB" id="HostDB:ENSG00000156219"/>
<dbReference type="eggNOG" id="ENOG502SHYX">
    <property type="taxonomic scope" value="Eukaryota"/>
</dbReference>
<dbReference type="GeneTree" id="ENSGT01030000234601"/>
<dbReference type="HOGENOM" id="CLU_059744_3_1_1"/>
<dbReference type="InParanoid" id="Q13508"/>
<dbReference type="OMA" id="EDPGMKS"/>
<dbReference type="OrthoDB" id="423533at2759"/>
<dbReference type="PAN-GO" id="Q13508">
    <property type="GO annotations" value="2 GO annotations based on evolutionary models"/>
</dbReference>
<dbReference type="PhylomeDB" id="Q13508"/>
<dbReference type="TreeFam" id="TF335356"/>
<dbReference type="PathwayCommons" id="Q13508"/>
<dbReference type="Reactome" id="R-HSA-163125">
    <property type="pathway name" value="Post-translational modification: synthesis of GPI-anchored proteins"/>
</dbReference>
<dbReference type="SignaLink" id="Q13508"/>
<dbReference type="BioGRID-ORCS" id="419">
    <property type="hits" value="12 hits in 1132 CRISPR screens"/>
</dbReference>
<dbReference type="ChiTaRS" id="ART3">
    <property type="organism name" value="human"/>
</dbReference>
<dbReference type="GeneWiki" id="ART3"/>
<dbReference type="GenomeRNAi" id="419"/>
<dbReference type="Pharos" id="Q13508">
    <property type="development level" value="Tbio"/>
</dbReference>
<dbReference type="PRO" id="PR:Q13508"/>
<dbReference type="Proteomes" id="UP000005640">
    <property type="component" value="Chromosome 4"/>
</dbReference>
<dbReference type="RNAct" id="Q13508">
    <property type="molecule type" value="protein"/>
</dbReference>
<dbReference type="Bgee" id="ENSG00000156219">
    <property type="expression patterns" value="Expressed in gastrocnemius and 127 other cell types or tissues"/>
</dbReference>
<dbReference type="ExpressionAtlas" id="Q13508">
    <property type="expression patterns" value="baseline and differential"/>
</dbReference>
<dbReference type="GO" id="GO:0070062">
    <property type="term" value="C:extracellular exosome"/>
    <property type="evidence" value="ECO:0007005"/>
    <property type="project" value="UniProtKB"/>
</dbReference>
<dbReference type="GO" id="GO:0005576">
    <property type="term" value="C:extracellular region"/>
    <property type="evidence" value="ECO:0000304"/>
    <property type="project" value="Reactome"/>
</dbReference>
<dbReference type="GO" id="GO:0005886">
    <property type="term" value="C:plasma membrane"/>
    <property type="evidence" value="ECO:0000304"/>
    <property type="project" value="Reactome"/>
</dbReference>
<dbReference type="GO" id="GO:0098552">
    <property type="term" value="C:side of membrane"/>
    <property type="evidence" value="ECO:0007669"/>
    <property type="project" value="UniProtKB-KW"/>
</dbReference>
<dbReference type="GO" id="GO:0003950">
    <property type="term" value="F:NAD+ poly-ADP-ribosyltransferase activity"/>
    <property type="evidence" value="ECO:0000318"/>
    <property type="project" value="GO_Central"/>
</dbReference>
<dbReference type="GO" id="GO:0106274">
    <property type="term" value="F:NAD+-protein-arginine ADP-ribosyltransferase activity"/>
    <property type="evidence" value="ECO:0007669"/>
    <property type="project" value="UniProtKB-EC"/>
</dbReference>
<dbReference type="GO" id="GO:0016779">
    <property type="term" value="F:nucleotidyltransferase activity"/>
    <property type="evidence" value="ECO:0007669"/>
    <property type="project" value="UniProtKB-KW"/>
</dbReference>
<dbReference type="FunFam" id="3.90.176.10:FF:000002">
    <property type="entry name" value="NAD(P)(+)--arginine ADP-ribosyltransferase"/>
    <property type="match status" value="1"/>
</dbReference>
<dbReference type="Gene3D" id="3.90.176.10">
    <property type="entry name" value="Toxin ADP-ribosyltransferase, Chain A, domain 1"/>
    <property type="match status" value="1"/>
</dbReference>
<dbReference type="InterPro" id="IPR050999">
    <property type="entry name" value="ADP-ribosyltransferase_ARG"/>
</dbReference>
<dbReference type="InterPro" id="IPR000768">
    <property type="entry name" value="ART"/>
</dbReference>
<dbReference type="PANTHER" id="PTHR10339">
    <property type="entry name" value="ADP-RIBOSYLTRANSFERASE"/>
    <property type="match status" value="1"/>
</dbReference>
<dbReference type="PANTHER" id="PTHR10339:SF4">
    <property type="entry name" value="ECTO-ADP-RIBOSYLTRANSFERASE 3"/>
    <property type="match status" value="1"/>
</dbReference>
<dbReference type="Pfam" id="PF01129">
    <property type="entry name" value="ART"/>
    <property type="match status" value="1"/>
</dbReference>
<dbReference type="PRINTS" id="PR00970">
    <property type="entry name" value="RIBTRNSFRASE"/>
</dbReference>
<dbReference type="SUPFAM" id="SSF56399">
    <property type="entry name" value="ADP-ribosylation"/>
    <property type="match status" value="1"/>
</dbReference>
<dbReference type="PROSITE" id="PS01291">
    <property type="entry name" value="ART"/>
    <property type="match status" value="1"/>
</dbReference>
<dbReference type="PROSITE" id="PS51996">
    <property type="entry name" value="TR_MART"/>
    <property type="match status" value="1"/>
</dbReference>